<gene>
    <name evidence="1" type="primary">tatA</name>
    <name type="ordered locus">PA14_66960</name>
</gene>
<dbReference type="EMBL" id="CP000438">
    <property type="protein sequence ID" value="ABJ14451.1"/>
    <property type="molecule type" value="Genomic_DNA"/>
</dbReference>
<dbReference type="RefSeq" id="WP_003095893.1">
    <property type="nucleotide sequence ID" value="NZ_CP034244.1"/>
</dbReference>
<dbReference type="SMR" id="Q02EU9"/>
<dbReference type="KEGG" id="pau:PA14_66960"/>
<dbReference type="PseudoCAP" id="PA14_66960"/>
<dbReference type="HOGENOM" id="CLU_086034_5_1_6"/>
<dbReference type="BioCyc" id="PAER208963:G1G74-5649-MONOMER"/>
<dbReference type="Proteomes" id="UP000000653">
    <property type="component" value="Chromosome"/>
</dbReference>
<dbReference type="GO" id="GO:0033281">
    <property type="term" value="C:TAT protein transport complex"/>
    <property type="evidence" value="ECO:0007669"/>
    <property type="project" value="UniProtKB-UniRule"/>
</dbReference>
<dbReference type="GO" id="GO:0008320">
    <property type="term" value="F:protein transmembrane transporter activity"/>
    <property type="evidence" value="ECO:0007669"/>
    <property type="project" value="UniProtKB-UniRule"/>
</dbReference>
<dbReference type="GO" id="GO:0043953">
    <property type="term" value="P:protein transport by the Tat complex"/>
    <property type="evidence" value="ECO:0007669"/>
    <property type="project" value="UniProtKB-UniRule"/>
</dbReference>
<dbReference type="Gene3D" id="1.20.5.3310">
    <property type="match status" value="1"/>
</dbReference>
<dbReference type="HAMAP" id="MF_00236">
    <property type="entry name" value="TatA_E"/>
    <property type="match status" value="1"/>
</dbReference>
<dbReference type="InterPro" id="IPR003369">
    <property type="entry name" value="TatA/B/E"/>
</dbReference>
<dbReference type="InterPro" id="IPR006312">
    <property type="entry name" value="TatA/E"/>
</dbReference>
<dbReference type="NCBIfam" id="NF001681">
    <property type="entry name" value="PRK00442.1"/>
    <property type="match status" value="1"/>
</dbReference>
<dbReference type="NCBIfam" id="TIGR01411">
    <property type="entry name" value="tatAE"/>
    <property type="match status" value="1"/>
</dbReference>
<dbReference type="PANTHER" id="PTHR42982">
    <property type="entry name" value="SEC-INDEPENDENT PROTEIN TRANSLOCASE PROTEIN TATA"/>
    <property type="match status" value="1"/>
</dbReference>
<dbReference type="PANTHER" id="PTHR42982:SF1">
    <property type="entry name" value="SEC-INDEPENDENT PROTEIN TRANSLOCASE PROTEIN TATA"/>
    <property type="match status" value="1"/>
</dbReference>
<dbReference type="Pfam" id="PF02416">
    <property type="entry name" value="TatA_B_E"/>
    <property type="match status" value="1"/>
</dbReference>
<proteinExistence type="inferred from homology"/>
<sequence length="82" mass="9190">MGIFDWKHWIVILIVVVLVFGTKRLKNLGSDVGEAIKGFRKAVNTEEDDKKDQPAAQPAQPLNQPHTIDAQAQKVEEPARKD</sequence>
<reference key="1">
    <citation type="journal article" date="2006" name="Genome Biol.">
        <title>Genomic analysis reveals that Pseudomonas aeruginosa virulence is combinatorial.</title>
        <authorList>
            <person name="Lee D.G."/>
            <person name="Urbach J.M."/>
            <person name="Wu G."/>
            <person name="Liberati N.T."/>
            <person name="Feinbaum R.L."/>
            <person name="Miyata S."/>
            <person name="Diggins L.T."/>
            <person name="He J."/>
            <person name="Saucier M."/>
            <person name="Deziel E."/>
            <person name="Friedman L."/>
            <person name="Li L."/>
            <person name="Grills G."/>
            <person name="Montgomery K."/>
            <person name="Kucherlapati R."/>
            <person name="Rahme L.G."/>
            <person name="Ausubel F.M."/>
        </authorList>
    </citation>
    <scope>NUCLEOTIDE SEQUENCE [LARGE SCALE GENOMIC DNA]</scope>
    <source>
        <strain>UCBPP-PA14</strain>
    </source>
</reference>
<organism>
    <name type="scientific">Pseudomonas aeruginosa (strain UCBPP-PA14)</name>
    <dbReference type="NCBI Taxonomy" id="208963"/>
    <lineage>
        <taxon>Bacteria</taxon>
        <taxon>Pseudomonadati</taxon>
        <taxon>Pseudomonadota</taxon>
        <taxon>Gammaproteobacteria</taxon>
        <taxon>Pseudomonadales</taxon>
        <taxon>Pseudomonadaceae</taxon>
        <taxon>Pseudomonas</taxon>
    </lineage>
</organism>
<accession>Q02EU9</accession>
<evidence type="ECO:0000255" key="1">
    <source>
        <dbReference type="HAMAP-Rule" id="MF_00236"/>
    </source>
</evidence>
<evidence type="ECO:0000256" key="2">
    <source>
        <dbReference type="SAM" id="MobiDB-lite"/>
    </source>
</evidence>
<protein>
    <recommendedName>
        <fullName evidence="1">Sec-independent protein translocase protein TatA</fullName>
    </recommendedName>
</protein>
<name>TATA_PSEAB</name>
<keyword id="KW-0997">Cell inner membrane</keyword>
<keyword id="KW-1003">Cell membrane</keyword>
<keyword id="KW-0472">Membrane</keyword>
<keyword id="KW-0653">Protein transport</keyword>
<keyword id="KW-0811">Translocation</keyword>
<keyword id="KW-0812">Transmembrane</keyword>
<keyword id="KW-1133">Transmembrane helix</keyword>
<keyword id="KW-0813">Transport</keyword>
<comment type="function">
    <text evidence="1">Part of the twin-arginine translocation (Tat) system that transports large folded proteins containing a characteristic twin-arginine motif in their signal peptide across membranes. TatA could form the protein-conducting channel of the Tat system.</text>
</comment>
<comment type="subunit">
    <text evidence="1">The Tat system comprises two distinct complexes: a TatABC complex, containing multiple copies of TatA, TatB and TatC subunits, and a separate TatA complex, containing only TatA subunits. Substrates initially bind to the TatABC complex, which probably triggers association of the separate TatA complex to form the active translocon.</text>
</comment>
<comment type="subcellular location">
    <subcellularLocation>
        <location evidence="1">Cell inner membrane</location>
        <topology evidence="1">Single-pass membrane protein</topology>
    </subcellularLocation>
</comment>
<comment type="similarity">
    <text evidence="1">Belongs to the TatA/E family.</text>
</comment>
<feature type="chain" id="PRO_1000044421" description="Sec-independent protein translocase protein TatA">
    <location>
        <begin position="1"/>
        <end position="82"/>
    </location>
</feature>
<feature type="transmembrane region" description="Helical" evidence="1">
    <location>
        <begin position="1"/>
        <end position="21"/>
    </location>
</feature>
<feature type="region of interest" description="Disordered" evidence="2">
    <location>
        <begin position="43"/>
        <end position="82"/>
    </location>
</feature>